<organism>
    <name type="scientific">Bacillus subtilis (strain 168)</name>
    <dbReference type="NCBI Taxonomy" id="224308"/>
    <lineage>
        <taxon>Bacteria</taxon>
        <taxon>Bacillati</taxon>
        <taxon>Bacillota</taxon>
        <taxon>Bacilli</taxon>
        <taxon>Bacillales</taxon>
        <taxon>Bacillaceae</taxon>
        <taxon>Bacillus</taxon>
    </lineage>
</organism>
<keyword id="KW-1185">Reference proteome</keyword>
<proteinExistence type="predicted"/>
<accession>O32285</accession>
<feature type="chain" id="PRO_0000050047" description="Uncharacterized protein YxzG">
    <location>
        <begin position="1"/>
        <end position="150"/>
    </location>
</feature>
<protein>
    <recommendedName>
        <fullName>Uncharacterized protein YxzG</fullName>
    </recommendedName>
</protein>
<sequence length="150" mass="16786">MWCFTLDGQQKEIHIDRKLEEMDAPAVDDCYGLAEKNGLIYMLYYGDAVIAAFDETVVRRVWILSDKEPDSEAFDQLAISEEGFLVGTFNCYSADLKSSLYLISADVSQEMEEITCCDSNGEGLDVQQLKLTSYAVYAVASSGVYKQDIQ</sequence>
<reference key="1">
    <citation type="journal article" date="1997" name="Nature">
        <title>The complete genome sequence of the Gram-positive bacterium Bacillus subtilis.</title>
        <authorList>
            <person name="Kunst F."/>
            <person name="Ogasawara N."/>
            <person name="Moszer I."/>
            <person name="Albertini A.M."/>
            <person name="Alloni G."/>
            <person name="Azevedo V."/>
            <person name="Bertero M.G."/>
            <person name="Bessieres P."/>
            <person name="Bolotin A."/>
            <person name="Borchert S."/>
            <person name="Borriss R."/>
            <person name="Boursier L."/>
            <person name="Brans A."/>
            <person name="Braun M."/>
            <person name="Brignell S.C."/>
            <person name="Bron S."/>
            <person name="Brouillet S."/>
            <person name="Bruschi C.V."/>
            <person name="Caldwell B."/>
            <person name="Capuano V."/>
            <person name="Carter N.M."/>
            <person name="Choi S.-K."/>
            <person name="Codani J.-J."/>
            <person name="Connerton I.F."/>
            <person name="Cummings N.J."/>
            <person name="Daniel R.A."/>
            <person name="Denizot F."/>
            <person name="Devine K.M."/>
            <person name="Duesterhoeft A."/>
            <person name="Ehrlich S.D."/>
            <person name="Emmerson P.T."/>
            <person name="Entian K.-D."/>
            <person name="Errington J."/>
            <person name="Fabret C."/>
            <person name="Ferrari E."/>
            <person name="Foulger D."/>
            <person name="Fritz C."/>
            <person name="Fujita M."/>
            <person name="Fujita Y."/>
            <person name="Fuma S."/>
            <person name="Galizzi A."/>
            <person name="Galleron N."/>
            <person name="Ghim S.-Y."/>
            <person name="Glaser P."/>
            <person name="Goffeau A."/>
            <person name="Golightly E.J."/>
            <person name="Grandi G."/>
            <person name="Guiseppi G."/>
            <person name="Guy B.J."/>
            <person name="Haga K."/>
            <person name="Haiech J."/>
            <person name="Harwood C.R."/>
            <person name="Henaut A."/>
            <person name="Hilbert H."/>
            <person name="Holsappel S."/>
            <person name="Hosono S."/>
            <person name="Hullo M.-F."/>
            <person name="Itaya M."/>
            <person name="Jones L.-M."/>
            <person name="Joris B."/>
            <person name="Karamata D."/>
            <person name="Kasahara Y."/>
            <person name="Klaerr-Blanchard M."/>
            <person name="Klein C."/>
            <person name="Kobayashi Y."/>
            <person name="Koetter P."/>
            <person name="Koningstein G."/>
            <person name="Krogh S."/>
            <person name="Kumano M."/>
            <person name="Kurita K."/>
            <person name="Lapidus A."/>
            <person name="Lardinois S."/>
            <person name="Lauber J."/>
            <person name="Lazarevic V."/>
            <person name="Lee S.-M."/>
            <person name="Levine A."/>
            <person name="Liu H."/>
            <person name="Masuda S."/>
            <person name="Mauel C."/>
            <person name="Medigue C."/>
            <person name="Medina N."/>
            <person name="Mellado R.P."/>
            <person name="Mizuno M."/>
            <person name="Moestl D."/>
            <person name="Nakai S."/>
            <person name="Noback M."/>
            <person name="Noone D."/>
            <person name="O'Reilly M."/>
            <person name="Ogawa K."/>
            <person name="Ogiwara A."/>
            <person name="Oudega B."/>
            <person name="Park S.-H."/>
            <person name="Parro V."/>
            <person name="Pohl T.M."/>
            <person name="Portetelle D."/>
            <person name="Porwollik S."/>
            <person name="Prescott A.M."/>
            <person name="Presecan E."/>
            <person name="Pujic P."/>
            <person name="Purnelle B."/>
            <person name="Rapoport G."/>
            <person name="Rey M."/>
            <person name="Reynolds S."/>
            <person name="Rieger M."/>
            <person name="Rivolta C."/>
            <person name="Rocha E."/>
            <person name="Roche B."/>
            <person name="Rose M."/>
            <person name="Sadaie Y."/>
            <person name="Sato T."/>
            <person name="Scanlan E."/>
            <person name="Schleich S."/>
            <person name="Schroeter R."/>
            <person name="Scoffone F."/>
            <person name="Sekiguchi J."/>
            <person name="Sekowska A."/>
            <person name="Seror S.J."/>
            <person name="Serror P."/>
            <person name="Shin B.-S."/>
            <person name="Soldo B."/>
            <person name="Sorokin A."/>
            <person name="Tacconi E."/>
            <person name="Takagi T."/>
            <person name="Takahashi H."/>
            <person name="Takemaru K."/>
            <person name="Takeuchi M."/>
            <person name="Tamakoshi A."/>
            <person name="Tanaka T."/>
            <person name="Terpstra P."/>
            <person name="Tognoni A."/>
            <person name="Tosato V."/>
            <person name="Uchiyama S."/>
            <person name="Vandenbol M."/>
            <person name="Vannier F."/>
            <person name="Vassarotti A."/>
            <person name="Viari A."/>
            <person name="Wambutt R."/>
            <person name="Wedler E."/>
            <person name="Wedler H."/>
            <person name="Weitzenegger T."/>
            <person name="Winters P."/>
            <person name="Wipat A."/>
            <person name="Yamamoto H."/>
            <person name="Yamane K."/>
            <person name="Yasumoto K."/>
            <person name="Yata K."/>
            <person name="Yoshida K."/>
            <person name="Yoshikawa H.-F."/>
            <person name="Zumstein E."/>
            <person name="Yoshikawa H."/>
            <person name="Danchin A."/>
        </authorList>
    </citation>
    <scope>NUCLEOTIDE SEQUENCE [LARGE SCALE GENOMIC DNA]</scope>
    <source>
        <strain>168</strain>
    </source>
</reference>
<dbReference type="EMBL" id="AL009126">
    <property type="protein sequence ID" value="CAB15953.1"/>
    <property type="molecule type" value="Genomic_DNA"/>
</dbReference>
<dbReference type="PIR" id="G70083">
    <property type="entry name" value="G70083"/>
</dbReference>
<dbReference type="RefSeq" id="NP_391796.1">
    <property type="nucleotide sequence ID" value="NC_000964.3"/>
</dbReference>
<dbReference type="RefSeq" id="WP_003227178.1">
    <property type="nucleotide sequence ID" value="NZ_OZ025638.1"/>
</dbReference>
<dbReference type="FunCoup" id="O32285">
    <property type="interactions" value="22"/>
</dbReference>
<dbReference type="STRING" id="224308.BSU39170"/>
<dbReference type="PaxDb" id="224308-BSU39170"/>
<dbReference type="EnsemblBacteria" id="CAB15953">
    <property type="protein sequence ID" value="CAB15953"/>
    <property type="gene ID" value="BSU_39170"/>
</dbReference>
<dbReference type="GeneID" id="937507"/>
<dbReference type="KEGG" id="bsu:BSU39170"/>
<dbReference type="PATRIC" id="fig|224308.179.peg.4241"/>
<dbReference type="eggNOG" id="ENOG5030BT9">
    <property type="taxonomic scope" value="Bacteria"/>
</dbReference>
<dbReference type="InParanoid" id="O32285"/>
<dbReference type="OrthoDB" id="2920634at2"/>
<dbReference type="BioCyc" id="BSUB:BSU39170-MONOMER"/>
<dbReference type="Proteomes" id="UP000001570">
    <property type="component" value="Chromosome"/>
</dbReference>
<name>YXZG_BACSU</name>
<gene>
    <name type="primary">yxzG</name>
    <name type="ordered locus">BSU39170</name>
</gene>